<protein>
    <recommendedName>
        <fullName>Alpha-endosulfine</fullName>
    </recommendedName>
</protein>
<sequence>MSDKYIGDSHLEETGEEKQDSQEKEAVTPEKAEEQKLKAKYPNLGQKPGGSDFLMKRLQKGQKYFDSGDYNMAKAKMKNKQLPCAGPDKNLVTGDHIPTPQDLPQRKSSLVTSKLAGHVEDLHQV</sequence>
<organism>
    <name type="scientific">Xenopus tropicalis</name>
    <name type="common">Western clawed frog</name>
    <name type="synonym">Silurana tropicalis</name>
    <dbReference type="NCBI Taxonomy" id="8364"/>
    <lineage>
        <taxon>Eukaryota</taxon>
        <taxon>Metazoa</taxon>
        <taxon>Chordata</taxon>
        <taxon>Craniata</taxon>
        <taxon>Vertebrata</taxon>
        <taxon>Euteleostomi</taxon>
        <taxon>Amphibia</taxon>
        <taxon>Batrachia</taxon>
        <taxon>Anura</taxon>
        <taxon>Pipoidea</taxon>
        <taxon>Pipidae</taxon>
        <taxon>Xenopodinae</taxon>
        <taxon>Xenopus</taxon>
        <taxon>Silurana</taxon>
    </lineage>
</organism>
<evidence type="ECO:0000250" key="1"/>
<evidence type="ECO:0000256" key="2">
    <source>
        <dbReference type="SAM" id="MobiDB-lite"/>
    </source>
</evidence>
<evidence type="ECO:0000305" key="3"/>
<accession>Q6NVR1</accession>
<comment type="function">
    <text evidence="1">Protein phosphatase inhibitor that specifically inhibits protein phosphatase 2A (PP2A) during mitosis. When phosphorylated at Ser-67 during mitosis, specifically interacts with ppp2r2d (PR55-delta) and inhibits its activity, leading to inactivation of PP2A, an essential condition to keep cyclin-B1-CDK1 activity high during M phase (By similarity).</text>
</comment>
<comment type="subcellular location">
    <subcellularLocation>
        <location evidence="1">Cytoplasm</location>
    </subcellularLocation>
</comment>
<comment type="PTM">
    <text evidence="1">Phosphorylation at Ser-67 by gwl during mitosis is essential for interaction with ppp2r2d (PR55-delta) and subsequent inactivation of PP2A.</text>
</comment>
<comment type="similarity">
    <text evidence="3">Belongs to the endosulfine family.</text>
</comment>
<feature type="chain" id="PRO_0000371567" description="Alpha-endosulfine">
    <location>
        <begin position="1"/>
        <end position="125"/>
    </location>
</feature>
<feature type="region of interest" description="Disordered" evidence="2">
    <location>
        <begin position="1"/>
        <end position="53"/>
    </location>
</feature>
<feature type="region of interest" description="Disordered" evidence="2">
    <location>
        <begin position="81"/>
        <end position="108"/>
    </location>
</feature>
<feature type="compositionally biased region" description="Basic and acidic residues" evidence="2">
    <location>
        <begin position="1"/>
        <end position="37"/>
    </location>
</feature>
<feature type="modified residue" description="Phosphothreonine; by CDK2" evidence="1">
    <location>
        <position position="28"/>
    </location>
</feature>
<feature type="modified residue" description="Phosphoserine; by GWL" evidence="1">
    <location>
        <position position="67"/>
    </location>
</feature>
<feature type="modified residue" description="Phosphothreonine; by CDK2" evidence="1">
    <location>
        <position position="99"/>
    </location>
</feature>
<feature type="modified residue" description="Phosphoserine; by PKA" evidence="1">
    <location>
        <position position="109"/>
    </location>
</feature>
<reference key="1">
    <citation type="submission" date="2006-10" db="EMBL/GenBank/DDBJ databases">
        <authorList>
            <consortium name="Sanger Xenopus tropicalis EST/cDNA project"/>
        </authorList>
    </citation>
    <scope>NUCLEOTIDE SEQUENCE [LARGE SCALE MRNA]</scope>
    <source>
        <tissue>Tadpole</tissue>
    </source>
</reference>
<reference key="2">
    <citation type="submission" date="2004-03" db="EMBL/GenBank/DDBJ databases">
        <authorList>
            <consortium name="NIH - Xenopus Gene Collection (XGC) project"/>
        </authorList>
    </citation>
    <scope>NUCLEOTIDE SEQUENCE [LARGE SCALE MRNA]</scope>
    <source>
        <tissue>Embryo</tissue>
    </source>
</reference>
<name>ENSA_XENTR</name>
<keyword id="KW-0131">Cell cycle</keyword>
<keyword id="KW-0132">Cell division</keyword>
<keyword id="KW-0963">Cytoplasm</keyword>
<keyword id="KW-0498">Mitosis</keyword>
<keyword id="KW-0597">Phosphoprotein</keyword>
<keyword id="KW-0650">Protein phosphatase inhibitor</keyword>
<keyword id="KW-1185">Reference proteome</keyword>
<dbReference type="EMBL" id="CR760899">
    <property type="protein sequence ID" value="CAJ82927.1"/>
    <property type="molecule type" value="mRNA"/>
</dbReference>
<dbReference type="EMBL" id="BC067944">
    <property type="protein sequence ID" value="AAH67944.1"/>
    <property type="molecule type" value="mRNA"/>
</dbReference>
<dbReference type="RefSeq" id="NP_998845.1">
    <property type="nucleotide sequence ID" value="NM_213680.1"/>
</dbReference>
<dbReference type="SMR" id="Q6NVR1"/>
<dbReference type="FunCoup" id="Q6NVR1">
    <property type="interactions" value="2910"/>
</dbReference>
<dbReference type="STRING" id="8364.ENSXETP00000017753"/>
<dbReference type="PaxDb" id="8364-ENSXETP00000056121"/>
<dbReference type="DNASU" id="407936"/>
<dbReference type="GeneID" id="407936"/>
<dbReference type="KEGG" id="xtr:407936"/>
<dbReference type="AGR" id="Xenbase:XB-GENE-943824"/>
<dbReference type="CTD" id="2029"/>
<dbReference type="Xenbase" id="XB-GENE-943824">
    <property type="gene designation" value="ensa"/>
</dbReference>
<dbReference type="eggNOG" id="KOG4076">
    <property type="taxonomic scope" value="Eukaryota"/>
</dbReference>
<dbReference type="HOGENOM" id="CLU_125025_0_1_1"/>
<dbReference type="InParanoid" id="Q6NVR1"/>
<dbReference type="OMA" id="QMAKQNP"/>
<dbReference type="OrthoDB" id="5949865at2759"/>
<dbReference type="PhylomeDB" id="Q6NVR1"/>
<dbReference type="TreeFam" id="TF314718"/>
<dbReference type="Proteomes" id="UP000008143">
    <property type="component" value="Chromosome 8"/>
</dbReference>
<dbReference type="Bgee" id="ENSXETG00000026684">
    <property type="expression patterns" value="Expressed in skeletal muscle tissue and 18 other cell types or tissues"/>
</dbReference>
<dbReference type="GO" id="GO:0005737">
    <property type="term" value="C:cytoplasm"/>
    <property type="evidence" value="ECO:0007669"/>
    <property type="project" value="UniProtKB-SubCell"/>
</dbReference>
<dbReference type="GO" id="GO:0019212">
    <property type="term" value="F:phosphatase inhibitor activity"/>
    <property type="evidence" value="ECO:0000250"/>
    <property type="project" value="UniProtKB"/>
</dbReference>
<dbReference type="GO" id="GO:0051721">
    <property type="term" value="F:protein phosphatase 2A binding"/>
    <property type="evidence" value="ECO:0000250"/>
    <property type="project" value="UniProtKB"/>
</dbReference>
<dbReference type="GO" id="GO:0004864">
    <property type="term" value="F:protein phosphatase inhibitor activity"/>
    <property type="evidence" value="ECO:0007669"/>
    <property type="project" value="UniProtKB-KW"/>
</dbReference>
<dbReference type="GO" id="GO:0019888">
    <property type="term" value="F:protein phosphatase regulator activity"/>
    <property type="evidence" value="ECO:0000250"/>
    <property type="project" value="UniProtKB"/>
</dbReference>
<dbReference type="GO" id="GO:0051301">
    <property type="term" value="P:cell division"/>
    <property type="evidence" value="ECO:0007669"/>
    <property type="project" value="UniProtKB-KW"/>
</dbReference>
<dbReference type="GO" id="GO:0000086">
    <property type="term" value="P:G2/M transition of mitotic cell cycle"/>
    <property type="evidence" value="ECO:0000250"/>
    <property type="project" value="UniProtKB"/>
</dbReference>
<dbReference type="GO" id="GO:0000278">
    <property type="term" value="P:mitotic cell cycle"/>
    <property type="evidence" value="ECO:0000250"/>
    <property type="project" value="UniProtKB"/>
</dbReference>
<dbReference type="InterPro" id="IPR006760">
    <property type="entry name" value="Endosulphine"/>
</dbReference>
<dbReference type="PANTHER" id="PTHR10358:SF21">
    <property type="entry name" value="ALPHA-ENDOSULFINE"/>
    <property type="match status" value="1"/>
</dbReference>
<dbReference type="PANTHER" id="PTHR10358">
    <property type="entry name" value="ENDOSULFINE"/>
    <property type="match status" value="1"/>
</dbReference>
<dbReference type="Pfam" id="PF04667">
    <property type="entry name" value="Endosulfine"/>
    <property type="match status" value="1"/>
</dbReference>
<proteinExistence type="evidence at transcript level"/>
<gene>
    <name type="primary">ensa</name>
    <name type="ORF">TTpA018o10.1</name>
</gene>